<proteinExistence type="inferred from homology"/>
<sequence length="396" mass="44144">MSVRLVLAKGREKSLLRRHPWVFSGAVARMEGKAAPGETIDIVDHQGKWLARAALSPASQIRARVWTFDPNETIDIAFFTRRLQQAQQWRDWLAKKDGLDSYRLIAGESDGLPGVTIDRFGNFLVLQLLSAGAEYQRPALVSALQALYPECAIYDRSDVAVRKKEGMELAQGPVSGELPPDLLAIEEHGMKLLVDIKGGHKTGYYLDQRDSRFATRRYVEDKRVLNCFSYTGGFAVSALMGGCRQVISVDTSQDALDVAKQNVELNKLDLSKAEFVRDDVFKLLRKYRDQGETFDVIVMDPPKFVENKSQLQGACRGYKDINMLAIQLLNPGGILLTFSCSGLMTTDLFQKIVADAATDAGRDVQFIEQFRQAADHPVIASYPEGLYLKGFACHVM</sequence>
<dbReference type="EC" id="2.1.1.191" evidence="1"/>
<dbReference type="EMBL" id="CP000783">
    <property type="protein sequence ID" value="ABU77628.1"/>
    <property type="molecule type" value="Genomic_DNA"/>
</dbReference>
<dbReference type="RefSeq" id="WP_012125179.1">
    <property type="nucleotide sequence ID" value="NC_009778.1"/>
</dbReference>
<dbReference type="SMR" id="A7ME44"/>
<dbReference type="KEGG" id="esa:ESA_02382"/>
<dbReference type="PATRIC" id="fig|290339.8.peg.2112"/>
<dbReference type="HOGENOM" id="CLU_014042_0_0_6"/>
<dbReference type="Proteomes" id="UP000000260">
    <property type="component" value="Chromosome"/>
</dbReference>
<dbReference type="GO" id="GO:0005737">
    <property type="term" value="C:cytoplasm"/>
    <property type="evidence" value="ECO:0007669"/>
    <property type="project" value="UniProtKB-SubCell"/>
</dbReference>
<dbReference type="GO" id="GO:0003723">
    <property type="term" value="F:RNA binding"/>
    <property type="evidence" value="ECO:0007669"/>
    <property type="project" value="UniProtKB-KW"/>
</dbReference>
<dbReference type="GO" id="GO:0016434">
    <property type="term" value="F:rRNA (cytosine) methyltransferase activity"/>
    <property type="evidence" value="ECO:0007669"/>
    <property type="project" value="UniProtKB-UniRule"/>
</dbReference>
<dbReference type="CDD" id="cd02440">
    <property type="entry name" value="AdoMet_MTases"/>
    <property type="match status" value="1"/>
</dbReference>
<dbReference type="CDD" id="cd21153">
    <property type="entry name" value="PUA_RlmI"/>
    <property type="match status" value="1"/>
</dbReference>
<dbReference type="CDD" id="cd11572">
    <property type="entry name" value="RlmI_M_like"/>
    <property type="match status" value="1"/>
</dbReference>
<dbReference type="FunFam" id="3.40.50.150:FF:000044">
    <property type="entry name" value="Ribosomal RNA large subunit methyltransferase I"/>
    <property type="match status" value="1"/>
</dbReference>
<dbReference type="Gene3D" id="2.30.130.10">
    <property type="entry name" value="PUA domain"/>
    <property type="match status" value="1"/>
</dbReference>
<dbReference type="Gene3D" id="3.30.750.80">
    <property type="entry name" value="RNA methyltransferase domain (HRMD) like"/>
    <property type="match status" value="1"/>
</dbReference>
<dbReference type="Gene3D" id="3.40.50.150">
    <property type="entry name" value="Vaccinia Virus protein VP39"/>
    <property type="match status" value="1"/>
</dbReference>
<dbReference type="HAMAP" id="MF_01857">
    <property type="entry name" value="23SrRNA_methyltr_I"/>
    <property type="match status" value="1"/>
</dbReference>
<dbReference type="InterPro" id="IPR002478">
    <property type="entry name" value="PUA"/>
</dbReference>
<dbReference type="InterPro" id="IPR015947">
    <property type="entry name" value="PUA-like_sf"/>
</dbReference>
<dbReference type="InterPro" id="IPR036974">
    <property type="entry name" value="PUA_sf"/>
</dbReference>
<dbReference type="InterPro" id="IPR023542">
    <property type="entry name" value="RLMI"/>
</dbReference>
<dbReference type="InterPro" id="IPR041532">
    <property type="entry name" value="RlmI-like_PUA"/>
</dbReference>
<dbReference type="InterPro" id="IPR019614">
    <property type="entry name" value="SAM-dep_methyl-trfase"/>
</dbReference>
<dbReference type="InterPro" id="IPR029063">
    <property type="entry name" value="SAM-dependent_MTases_sf"/>
</dbReference>
<dbReference type="NCBIfam" id="NF011707">
    <property type="entry name" value="PRK15128.1"/>
    <property type="match status" value="1"/>
</dbReference>
<dbReference type="PANTHER" id="PTHR42873">
    <property type="entry name" value="RIBOSOMAL RNA LARGE SUBUNIT METHYLTRANSFERASE"/>
    <property type="match status" value="1"/>
</dbReference>
<dbReference type="PANTHER" id="PTHR42873:SF1">
    <property type="entry name" value="S-ADENOSYLMETHIONINE-DEPENDENT METHYLTRANSFERASE DOMAIN-CONTAINING PROTEIN"/>
    <property type="match status" value="1"/>
</dbReference>
<dbReference type="Pfam" id="PF10672">
    <property type="entry name" value="Methyltrans_SAM"/>
    <property type="match status" value="1"/>
</dbReference>
<dbReference type="Pfam" id="PF17785">
    <property type="entry name" value="PUA_3"/>
    <property type="match status" value="1"/>
</dbReference>
<dbReference type="SMART" id="SM00359">
    <property type="entry name" value="PUA"/>
    <property type="match status" value="1"/>
</dbReference>
<dbReference type="SUPFAM" id="SSF88697">
    <property type="entry name" value="PUA domain-like"/>
    <property type="match status" value="1"/>
</dbReference>
<dbReference type="SUPFAM" id="SSF53335">
    <property type="entry name" value="S-adenosyl-L-methionine-dependent methyltransferases"/>
    <property type="match status" value="1"/>
</dbReference>
<dbReference type="PROSITE" id="PS50890">
    <property type="entry name" value="PUA"/>
    <property type="match status" value="1"/>
</dbReference>
<protein>
    <recommendedName>
        <fullName evidence="1">Ribosomal RNA large subunit methyltransferase I</fullName>
        <ecNumber evidence="1">2.1.1.191</ecNumber>
    </recommendedName>
    <alternativeName>
        <fullName evidence="1">23S rRNA m5C1962 methyltransferase</fullName>
    </alternativeName>
    <alternativeName>
        <fullName evidence="1">rRNA (cytosine-C(5)-)-methyltransferase RlmI</fullName>
    </alternativeName>
</protein>
<evidence type="ECO:0000255" key="1">
    <source>
        <dbReference type="HAMAP-Rule" id="MF_01857"/>
    </source>
</evidence>
<comment type="function">
    <text evidence="1">Specifically methylates the cytosine at position 1962 (m5C1962) of 23S rRNA.</text>
</comment>
<comment type="catalytic activity">
    <reaction evidence="1">
        <text>cytidine(1962) in 23S rRNA + S-adenosyl-L-methionine = 5-methylcytidine(1962) in 23S rRNA + S-adenosyl-L-homocysteine + H(+)</text>
        <dbReference type="Rhea" id="RHEA:42912"/>
        <dbReference type="Rhea" id="RHEA-COMP:10382"/>
        <dbReference type="Rhea" id="RHEA-COMP:10386"/>
        <dbReference type="ChEBI" id="CHEBI:15378"/>
        <dbReference type="ChEBI" id="CHEBI:57856"/>
        <dbReference type="ChEBI" id="CHEBI:59789"/>
        <dbReference type="ChEBI" id="CHEBI:74483"/>
        <dbReference type="ChEBI" id="CHEBI:82748"/>
        <dbReference type="EC" id="2.1.1.191"/>
    </reaction>
</comment>
<comment type="subcellular location">
    <subcellularLocation>
        <location evidence="1">Cytoplasm</location>
    </subcellularLocation>
</comment>
<comment type="similarity">
    <text evidence="1">Belongs to the methyltransferase superfamily. RlmI family.</text>
</comment>
<keyword id="KW-0963">Cytoplasm</keyword>
<keyword id="KW-0489">Methyltransferase</keyword>
<keyword id="KW-1185">Reference proteome</keyword>
<keyword id="KW-0694">RNA-binding</keyword>
<keyword id="KW-0698">rRNA processing</keyword>
<keyword id="KW-0949">S-adenosyl-L-methionine</keyword>
<keyword id="KW-0808">Transferase</keyword>
<accession>A7ME44</accession>
<organism>
    <name type="scientific">Cronobacter sakazakii (strain ATCC BAA-894)</name>
    <name type="common">Enterobacter sakazakii</name>
    <dbReference type="NCBI Taxonomy" id="290339"/>
    <lineage>
        <taxon>Bacteria</taxon>
        <taxon>Pseudomonadati</taxon>
        <taxon>Pseudomonadota</taxon>
        <taxon>Gammaproteobacteria</taxon>
        <taxon>Enterobacterales</taxon>
        <taxon>Enterobacteriaceae</taxon>
        <taxon>Cronobacter</taxon>
    </lineage>
</organism>
<reference key="1">
    <citation type="journal article" date="2010" name="PLoS ONE">
        <title>Genome sequence of Cronobacter sakazakii BAA-894 and comparative genomic hybridization analysis with other Cronobacter species.</title>
        <authorList>
            <person name="Kucerova E."/>
            <person name="Clifton S.W."/>
            <person name="Xia X.Q."/>
            <person name="Long F."/>
            <person name="Porwollik S."/>
            <person name="Fulton L."/>
            <person name="Fronick C."/>
            <person name="Minx P."/>
            <person name="Kyung K."/>
            <person name="Warren W."/>
            <person name="Fulton R."/>
            <person name="Feng D."/>
            <person name="Wollam A."/>
            <person name="Shah N."/>
            <person name="Bhonagiri V."/>
            <person name="Nash W.E."/>
            <person name="Hallsworth-Pepin K."/>
            <person name="Wilson R.K."/>
            <person name="McClelland M."/>
            <person name="Forsythe S.J."/>
        </authorList>
    </citation>
    <scope>NUCLEOTIDE SEQUENCE [LARGE SCALE GENOMIC DNA]</scope>
    <source>
        <strain>ATCC BAA-894</strain>
    </source>
</reference>
<name>RLMI_CROS8</name>
<gene>
    <name evidence="1" type="primary">rlmI</name>
    <name type="ordered locus">ESA_02382</name>
</gene>
<feature type="chain" id="PRO_0000366220" description="Ribosomal RNA large subunit methyltransferase I">
    <location>
        <begin position="1"/>
        <end position="396"/>
    </location>
</feature>
<feature type="domain" description="PUA" evidence="1">
    <location>
        <begin position="2"/>
        <end position="81"/>
    </location>
</feature>